<sequence>MRRPLVAGNWKMHGTRASVAELIEGLRRQELPVEVDVAVFPSSLHVTQVVEGLAGKAVKVGAQDCAAQVEQGALTGELAVSQLVDGGCELVLVGHSERRLILGESDEVVVSKFAAVQKAGLTPVLCVGETREQREANATLGVVGGQLAAVIDALGVQALNNAVVAYEPVWAIGTGLTATPEQAQEVHAAIRAQVAQLDAQVASELRILYGGSVKAASAAELFGMQDIDGGLVGGASLNADEFGAICRAAGN</sequence>
<name>TPIS_ECTM1</name>
<keyword id="KW-0963">Cytoplasm</keyword>
<keyword id="KW-0312">Gluconeogenesis</keyword>
<keyword id="KW-0324">Glycolysis</keyword>
<keyword id="KW-0413">Isomerase</keyword>
<organism>
    <name type="scientific">Ectopseudomonas mendocina (strain ymp)</name>
    <name type="common">Pseudomonas mendocina</name>
    <dbReference type="NCBI Taxonomy" id="399739"/>
    <lineage>
        <taxon>Bacteria</taxon>
        <taxon>Pseudomonadati</taxon>
        <taxon>Pseudomonadota</taxon>
        <taxon>Gammaproteobacteria</taxon>
        <taxon>Pseudomonadales</taxon>
        <taxon>Pseudomonadaceae</taxon>
        <taxon>Ectopseudomonas</taxon>
    </lineage>
</organism>
<gene>
    <name evidence="1" type="primary">tpiA</name>
    <name type="ordered locus">Pmen_3612</name>
</gene>
<dbReference type="EC" id="5.3.1.1" evidence="1"/>
<dbReference type="EMBL" id="CP000680">
    <property type="protein sequence ID" value="ABP86360.1"/>
    <property type="molecule type" value="Genomic_DNA"/>
</dbReference>
<dbReference type="SMR" id="A4XYE4"/>
<dbReference type="STRING" id="399739.Pmen_3612"/>
<dbReference type="KEGG" id="pmy:Pmen_3612"/>
<dbReference type="PATRIC" id="fig|399739.8.peg.3661"/>
<dbReference type="eggNOG" id="COG0149">
    <property type="taxonomic scope" value="Bacteria"/>
</dbReference>
<dbReference type="HOGENOM" id="CLU_024251_2_1_6"/>
<dbReference type="OrthoDB" id="9809429at2"/>
<dbReference type="UniPathway" id="UPA00109">
    <property type="reaction ID" value="UER00189"/>
</dbReference>
<dbReference type="UniPathway" id="UPA00138"/>
<dbReference type="GO" id="GO:0005829">
    <property type="term" value="C:cytosol"/>
    <property type="evidence" value="ECO:0007669"/>
    <property type="project" value="TreeGrafter"/>
</dbReference>
<dbReference type="GO" id="GO:0004807">
    <property type="term" value="F:triose-phosphate isomerase activity"/>
    <property type="evidence" value="ECO:0007669"/>
    <property type="project" value="UniProtKB-UniRule"/>
</dbReference>
<dbReference type="GO" id="GO:0006094">
    <property type="term" value="P:gluconeogenesis"/>
    <property type="evidence" value="ECO:0007669"/>
    <property type="project" value="UniProtKB-UniRule"/>
</dbReference>
<dbReference type="GO" id="GO:0046166">
    <property type="term" value="P:glyceraldehyde-3-phosphate biosynthetic process"/>
    <property type="evidence" value="ECO:0007669"/>
    <property type="project" value="TreeGrafter"/>
</dbReference>
<dbReference type="GO" id="GO:0019563">
    <property type="term" value="P:glycerol catabolic process"/>
    <property type="evidence" value="ECO:0007669"/>
    <property type="project" value="TreeGrafter"/>
</dbReference>
<dbReference type="GO" id="GO:0006096">
    <property type="term" value="P:glycolytic process"/>
    <property type="evidence" value="ECO:0007669"/>
    <property type="project" value="UniProtKB-UniRule"/>
</dbReference>
<dbReference type="CDD" id="cd00311">
    <property type="entry name" value="TIM"/>
    <property type="match status" value="1"/>
</dbReference>
<dbReference type="FunFam" id="3.20.20.70:FF:000016">
    <property type="entry name" value="Triosephosphate isomerase"/>
    <property type="match status" value="1"/>
</dbReference>
<dbReference type="Gene3D" id="3.20.20.70">
    <property type="entry name" value="Aldolase class I"/>
    <property type="match status" value="1"/>
</dbReference>
<dbReference type="HAMAP" id="MF_00147_B">
    <property type="entry name" value="TIM_B"/>
    <property type="match status" value="1"/>
</dbReference>
<dbReference type="InterPro" id="IPR013785">
    <property type="entry name" value="Aldolase_TIM"/>
</dbReference>
<dbReference type="InterPro" id="IPR035990">
    <property type="entry name" value="TIM_sf"/>
</dbReference>
<dbReference type="InterPro" id="IPR022896">
    <property type="entry name" value="TrioseP_Isoase_bac/euk"/>
</dbReference>
<dbReference type="InterPro" id="IPR000652">
    <property type="entry name" value="Triosephosphate_isomerase"/>
</dbReference>
<dbReference type="InterPro" id="IPR020861">
    <property type="entry name" value="Triosephosphate_isomerase_AS"/>
</dbReference>
<dbReference type="NCBIfam" id="TIGR00419">
    <property type="entry name" value="tim"/>
    <property type="match status" value="1"/>
</dbReference>
<dbReference type="PANTHER" id="PTHR21139">
    <property type="entry name" value="TRIOSEPHOSPHATE ISOMERASE"/>
    <property type="match status" value="1"/>
</dbReference>
<dbReference type="PANTHER" id="PTHR21139:SF42">
    <property type="entry name" value="TRIOSEPHOSPHATE ISOMERASE"/>
    <property type="match status" value="1"/>
</dbReference>
<dbReference type="Pfam" id="PF00121">
    <property type="entry name" value="TIM"/>
    <property type="match status" value="1"/>
</dbReference>
<dbReference type="SUPFAM" id="SSF51351">
    <property type="entry name" value="Triosephosphate isomerase (TIM)"/>
    <property type="match status" value="1"/>
</dbReference>
<dbReference type="PROSITE" id="PS00171">
    <property type="entry name" value="TIM_1"/>
    <property type="match status" value="1"/>
</dbReference>
<dbReference type="PROSITE" id="PS51440">
    <property type="entry name" value="TIM_2"/>
    <property type="match status" value="1"/>
</dbReference>
<accession>A4XYE4</accession>
<feature type="chain" id="PRO_1000009852" description="Triosephosphate isomerase">
    <location>
        <begin position="1"/>
        <end position="251"/>
    </location>
</feature>
<feature type="active site" description="Electrophile" evidence="1">
    <location>
        <position position="95"/>
    </location>
</feature>
<feature type="active site" description="Proton acceptor" evidence="1">
    <location>
        <position position="167"/>
    </location>
</feature>
<feature type="binding site" evidence="1">
    <location>
        <begin position="9"/>
        <end position="11"/>
    </location>
    <ligand>
        <name>substrate</name>
    </ligand>
</feature>
<feature type="binding site" evidence="1">
    <location>
        <position position="173"/>
    </location>
    <ligand>
        <name>substrate</name>
    </ligand>
</feature>
<feature type="binding site" evidence="1">
    <location>
        <position position="212"/>
    </location>
    <ligand>
        <name>substrate</name>
    </ligand>
</feature>
<feature type="binding site" evidence="1">
    <location>
        <begin position="233"/>
        <end position="234"/>
    </location>
    <ligand>
        <name>substrate</name>
    </ligand>
</feature>
<comment type="function">
    <text evidence="1">Involved in the gluconeogenesis. Catalyzes stereospecifically the conversion of dihydroxyacetone phosphate (DHAP) to D-glyceraldehyde-3-phosphate (G3P).</text>
</comment>
<comment type="catalytic activity">
    <reaction evidence="1">
        <text>D-glyceraldehyde 3-phosphate = dihydroxyacetone phosphate</text>
        <dbReference type="Rhea" id="RHEA:18585"/>
        <dbReference type="ChEBI" id="CHEBI:57642"/>
        <dbReference type="ChEBI" id="CHEBI:59776"/>
        <dbReference type="EC" id="5.3.1.1"/>
    </reaction>
</comment>
<comment type="pathway">
    <text evidence="1">Carbohydrate biosynthesis; gluconeogenesis.</text>
</comment>
<comment type="pathway">
    <text evidence="1">Carbohydrate degradation; glycolysis; D-glyceraldehyde 3-phosphate from glycerone phosphate: step 1/1.</text>
</comment>
<comment type="subunit">
    <text evidence="1">Homodimer.</text>
</comment>
<comment type="subcellular location">
    <subcellularLocation>
        <location evidence="1">Cytoplasm</location>
    </subcellularLocation>
</comment>
<comment type="similarity">
    <text evidence="1">Belongs to the triosephosphate isomerase family.</text>
</comment>
<evidence type="ECO:0000255" key="1">
    <source>
        <dbReference type="HAMAP-Rule" id="MF_00147"/>
    </source>
</evidence>
<protein>
    <recommendedName>
        <fullName evidence="1">Triosephosphate isomerase</fullName>
        <shortName evidence="1">TIM</shortName>
        <shortName evidence="1">TPI</shortName>
        <ecNumber evidence="1">5.3.1.1</ecNumber>
    </recommendedName>
    <alternativeName>
        <fullName evidence="1">Triose-phosphate isomerase</fullName>
    </alternativeName>
</protein>
<proteinExistence type="inferred from homology"/>
<reference key="1">
    <citation type="submission" date="2007-04" db="EMBL/GenBank/DDBJ databases">
        <title>Complete sequence of Pseudomonas mendocina ymp.</title>
        <authorList>
            <consortium name="US DOE Joint Genome Institute"/>
            <person name="Copeland A."/>
            <person name="Lucas S."/>
            <person name="Lapidus A."/>
            <person name="Barry K."/>
            <person name="Glavina del Rio T."/>
            <person name="Dalin E."/>
            <person name="Tice H."/>
            <person name="Pitluck S."/>
            <person name="Kiss H."/>
            <person name="Brettin T."/>
            <person name="Detter J.C."/>
            <person name="Bruce D."/>
            <person name="Han C."/>
            <person name="Schmutz J."/>
            <person name="Larimer F."/>
            <person name="Land M."/>
            <person name="Hauser L."/>
            <person name="Kyrpides N."/>
            <person name="Mikhailova N."/>
            <person name="Hersman L."/>
            <person name="Dubois J."/>
            <person name="Maurice P."/>
            <person name="Richardson P."/>
        </authorList>
    </citation>
    <scope>NUCLEOTIDE SEQUENCE [LARGE SCALE GENOMIC DNA]</scope>
    <source>
        <strain>ymp</strain>
    </source>
</reference>